<evidence type="ECO:0000250" key="1"/>
<evidence type="ECO:0000255" key="2"/>
<evidence type="ECO:0000255" key="3">
    <source>
        <dbReference type="PROSITE-ProRule" id="PRU10101"/>
    </source>
</evidence>
<evidence type="ECO:0000305" key="4"/>
<evidence type="ECO:0000305" key="5">
    <source>
    </source>
</evidence>
<comment type="function">
    <text>SHV enzymes hydrolyze broad spectrum cephalosporins notably cefotaxime and ceftazidime. SHV-5 causes particularly high levels of resistance to aztreonam and ceftazidime.</text>
</comment>
<comment type="catalytic activity">
    <reaction evidence="3">
        <text>a beta-lactam + H2O = a substituted beta-amino acid</text>
        <dbReference type="Rhea" id="RHEA:20401"/>
        <dbReference type="ChEBI" id="CHEBI:15377"/>
        <dbReference type="ChEBI" id="CHEBI:35627"/>
        <dbReference type="ChEBI" id="CHEBI:140347"/>
        <dbReference type="EC" id="3.5.2.6"/>
    </reaction>
</comment>
<comment type="miscellaneous">
    <text evidence="5">The class A beta-lactamase family has a specific amino-acid numbering system, sometimes called Ambler or ABL numbering and often misspelt as Amber. A multiple sequence alignment was used to derive a consensus sequence and then the consensus was numbered taking into account insertions and deletions. This allows use of identical numbers, e.g. for active site residues, despite differences in protein length. UniProt always uses natural numbering of residues, hence there appear to be differences in numbering between this entry and some papers.</text>
</comment>
<comment type="similarity">
    <text evidence="4">Belongs to the class-A beta-lactamase family.</text>
</comment>
<accession>P0A3M1</accession>
<accession>P37320</accession>
<reference key="1">
    <citation type="journal article" date="1990" name="Antimicrob. Agents Chemother.">
        <title>Nucleotide sequence of the SHV-5 beta-lactamase gene of a Klebsiella pneumoniae plasmid.</title>
        <authorList>
            <person name="Billot-Klein D."/>
            <person name="Gutmann L."/>
            <person name="Collatz E."/>
        </authorList>
    </citation>
    <scope>NUCLEOTIDE SEQUENCE [GENOMIC DNA]</scope>
    <source>
        <plasmid>pAFF1</plasmid>
    </source>
</reference>
<reference key="2">
    <citation type="journal article" date="1997" name="Antimicrob. Agents Chemother.">
        <title>Survey and molecular genetics of SHV beta-lactamases in Enterobacteriaceae in Switzerland: two novel enzymes, SHV-11 and SHV-12.</title>
        <authorList>
            <person name="Nuesch-Inderbinen M."/>
            <person name="Kayser F.H."/>
            <person name="Hachler H."/>
        </authorList>
    </citation>
    <scope>NUCLEOTIDE SEQUENCE [GENOMIC DNA]</scope>
    <source>
        <strain>KPGE-2</strain>
        <strain>KPLA-4</strain>
    </source>
</reference>
<reference key="3">
    <citation type="journal article" date="1991" name="Biochem. J.">
        <title>A standard numbering scheme for the class A beta-lactamases.</title>
        <authorList>
            <person name="Ambler R.P."/>
            <person name="Coulson A.F."/>
            <person name="Frere J.M."/>
            <person name="Ghuysen J.M."/>
            <person name="Joris B."/>
            <person name="Forsman M."/>
            <person name="Levesque R.C."/>
            <person name="Tiraby G."/>
            <person name="Waley S.G."/>
        </authorList>
    </citation>
    <scope>AMINO ACID NUMBERING SCHEME</scope>
</reference>
<geneLocation type="plasmid">
    <name>pAFF1</name>
</geneLocation>
<keyword id="KW-0046">Antibiotic resistance</keyword>
<keyword id="KW-1015">Disulfide bond</keyword>
<keyword id="KW-0378">Hydrolase</keyword>
<keyword id="KW-0614">Plasmid</keyword>
<keyword id="KW-0732">Signal</keyword>
<sequence length="286" mass="31253">MRYIRLCIISLLATLPLAVHASPQPLEQIKLSESQLSGRVGMIEMDLASGRTLTAWRADERFPMMSTFKVVLCGAVLARVDAGDEQLERKIHYRQQDLVDYSPVSEKHLADGMTVGELCAAAITMSDNSAANLLLATVGGPAGLTAFLRQIGDNVTRLDRWETELNEALPGDARDTTTPASMAATLRKLLTSQRLSARSQRQLLQWMVDDRVAGPLIRSVLPAGWFIADKTGASKRGARGIVALLGPNNKAERIVVIYLRDTPASMAERNQQIAGIGAALIEHWQR</sequence>
<organism>
    <name type="scientific">Klebsiella pneumoniae</name>
    <dbReference type="NCBI Taxonomy" id="573"/>
    <lineage>
        <taxon>Bacteria</taxon>
        <taxon>Pseudomonadati</taxon>
        <taxon>Pseudomonadota</taxon>
        <taxon>Gammaproteobacteria</taxon>
        <taxon>Enterobacterales</taxon>
        <taxon>Enterobacteriaceae</taxon>
        <taxon>Klebsiella/Raoultella group</taxon>
        <taxon>Klebsiella</taxon>
        <taxon>Klebsiella pneumoniae complex</taxon>
    </lineage>
</organism>
<proteinExistence type="inferred from homology"/>
<gene>
    <name type="primary">bla</name>
    <name type="synonym">shv5</name>
</gene>
<feature type="signal peptide" evidence="2">
    <location>
        <begin position="1"/>
        <end position="21"/>
    </location>
</feature>
<feature type="chain" id="PRO_0000016983" description="Beta-lactamase SHV-5">
    <location>
        <begin position="22"/>
        <end position="286"/>
    </location>
</feature>
<feature type="active site" description="Acyl-ester intermediate" evidence="3">
    <location>
        <position position="66"/>
    </location>
</feature>
<feature type="active site" description="Proton acceptor" evidence="1">
    <location>
        <position position="164"/>
    </location>
</feature>
<feature type="binding site" evidence="1">
    <location>
        <begin position="230"/>
        <end position="232"/>
    </location>
    <ligand>
        <name>substrate</name>
    </ligand>
</feature>
<feature type="disulfide bond" evidence="1">
    <location>
        <begin position="73"/>
        <end position="119"/>
    </location>
</feature>
<protein>
    <recommendedName>
        <fullName>Beta-lactamase SHV-5</fullName>
        <ecNumber>3.5.2.6</ecNumber>
    </recommendedName>
</protein>
<name>BLA5_KLEPN</name>
<dbReference type="EC" id="3.5.2.6"/>
<dbReference type="EMBL" id="X55640">
    <property type="protein sequence ID" value="CAA39164.1"/>
    <property type="molecule type" value="Genomic_DNA"/>
</dbReference>
<dbReference type="EMBL" id="X98103">
    <property type="protein sequence ID" value="CAA66731.1"/>
    <property type="molecule type" value="Genomic_DNA"/>
</dbReference>
<dbReference type="EMBL" id="X98104">
    <property type="protein sequence ID" value="CAA66732.1"/>
    <property type="molecule type" value="Genomic_DNA"/>
</dbReference>
<dbReference type="PIR" id="A60632">
    <property type="entry name" value="A60632"/>
</dbReference>
<dbReference type="SMR" id="P0A3M1"/>
<dbReference type="BindingDB" id="P0A3M1"/>
<dbReference type="ChEMBL" id="CHEMBL1075174"/>
<dbReference type="DrugCentral" id="P0A3M1"/>
<dbReference type="KEGG" id="ag:CAA39164"/>
<dbReference type="BRENDA" id="3.5.2.6">
    <property type="organism ID" value="2814"/>
</dbReference>
<dbReference type="SABIO-RK" id="P0A3M1"/>
<dbReference type="GO" id="GO:0008800">
    <property type="term" value="F:beta-lactamase activity"/>
    <property type="evidence" value="ECO:0007669"/>
    <property type="project" value="UniProtKB-EC"/>
</dbReference>
<dbReference type="GO" id="GO:0030655">
    <property type="term" value="P:beta-lactam antibiotic catabolic process"/>
    <property type="evidence" value="ECO:0007669"/>
    <property type="project" value="InterPro"/>
</dbReference>
<dbReference type="GO" id="GO:0046677">
    <property type="term" value="P:response to antibiotic"/>
    <property type="evidence" value="ECO:0007669"/>
    <property type="project" value="UniProtKB-KW"/>
</dbReference>
<dbReference type="Gene3D" id="3.40.710.10">
    <property type="entry name" value="DD-peptidase/beta-lactamase superfamily"/>
    <property type="match status" value="1"/>
</dbReference>
<dbReference type="InterPro" id="IPR012338">
    <property type="entry name" value="Beta-lactam/transpept-like"/>
</dbReference>
<dbReference type="InterPro" id="IPR045155">
    <property type="entry name" value="Beta-lactam_cat"/>
</dbReference>
<dbReference type="InterPro" id="IPR000871">
    <property type="entry name" value="Beta-lactam_class-A"/>
</dbReference>
<dbReference type="InterPro" id="IPR023650">
    <property type="entry name" value="Beta-lactam_class-A_AS"/>
</dbReference>
<dbReference type="NCBIfam" id="NF033103">
    <property type="entry name" value="bla_class_A"/>
    <property type="match status" value="1"/>
</dbReference>
<dbReference type="NCBIfam" id="NF000285">
    <property type="entry name" value="SHV"/>
    <property type="match status" value="1"/>
</dbReference>
<dbReference type="NCBIfam" id="NF012143">
    <property type="entry name" value="SHV_LEN_OKP"/>
    <property type="match status" value="1"/>
</dbReference>
<dbReference type="PANTHER" id="PTHR35333">
    <property type="entry name" value="BETA-LACTAMASE"/>
    <property type="match status" value="1"/>
</dbReference>
<dbReference type="PANTHER" id="PTHR35333:SF3">
    <property type="entry name" value="BETA-LACTAMASE-TYPE TRANSPEPTIDASE FOLD CONTAINING PROTEIN"/>
    <property type="match status" value="1"/>
</dbReference>
<dbReference type="Pfam" id="PF13354">
    <property type="entry name" value="Beta-lactamase2"/>
    <property type="match status" value="1"/>
</dbReference>
<dbReference type="PRINTS" id="PR00118">
    <property type="entry name" value="BLACTAMASEA"/>
</dbReference>
<dbReference type="SUPFAM" id="SSF56601">
    <property type="entry name" value="beta-lactamase/transpeptidase-like"/>
    <property type="match status" value="1"/>
</dbReference>
<dbReference type="PROSITE" id="PS00146">
    <property type="entry name" value="BETA_LACTAMASE_A"/>
    <property type="match status" value="1"/>
</dbReference>